<reference key="1">
    <citation type="submission" date="1998-05" db="EMBL/GenBank/DDBJ databases">
        <title>Cloning and expression of G subunits of vacuolar-type ATPase from plants.</title>
        <authorList>
            <person name="Rouquie D."/>
            <person name="Tournaire-Roux C."/>
            <person name="Szponarski W."/>
            <person name="Rossignol M."/>
            <person name="Doumas P."/>
        </authorList>
    </citation>
    <scope>NUCLEOTIDE SEQUENCE [MRNA]</scope>
    <source>
        <strain>cv. Columbia</strain>
        <tissue>Leaf</tissue>
    </source>
</reference>
<reference key="2">
    <citation type="submission" date="1999-08" db="EMBL/GenBank/DDBJ databases">
        <title>cDNA encoding subunit G of Arabidopsis thaliana V-ATPase.</title>
        <authorList>
            <person name="Hagai K."/>
            <person name="Nelson H."/>
            <person name="Nelson N."/>
        </authorList>
    </citation>
    <scope>NUCLEOTIDE SEQUENCE [MRNA]</scope>
</reference>
<reference key="3">
    <citation type="journal article" date="2000" name="Nature">
        <title>Sequence and analysis of chromosome 3 of the plant Arabidopsis thaliana.</title>
        <authorList>
            <person name="Salanoubat M."/>
            <person name="Lemcke K."/>
            <person name="Rieger M."/>
            <person name="Ansorge W."/>
            <person name="Unseld M."/>
            <person name="Fartmann B."/>
            <person name="Valle G."/>
            <person name="Bloecker H."/>
            <person name="Perez-Alonso M."/>
            <person name="Obermaier B."/>
            <person name="Delseny M."/>
            <person name="Boutry M."/>
            <person name="Grivell L.A."/>
            <person name="Mache R."/>
            <person name="Puigdomenech P."/>
            <person name="De Simone V."/>
            <person name="Choisne N."/>
            <person name="Artiguenave F."/>
            <person name="Robert C."/>
            <person name="Brottier P."/>
            <person name="Wincker P."/>
            <person name="Cattolico L."/>
            <person name="Weissenbach J."/>
            <person name="Saurin W."/>
            <person name="Quetier F."/>
            <person name="Schaefer M."/>
            <person name="Mueller-Auer S."/>
            <person name="Gabel C."/>
            <person name="Fuchs M."/>
            <person name="Benes V."/>
            <person name="Wurmbach E."/>
            <person name="Drzonek H."/>
            <person name="Erfle H."/>
            <person name="Jordan N."/>
            <person name="Bangert S."/>
            <person name="Wiedelmann R."/>
            <person name="Kranz H."/>
            <person name="Voss H."/>
            <person name="Holland R."/>
            <person name="Brandt P."/>
            <person name="Nyakatura G."/>
            <person name="Vezzi A."/>
            <person name="D'Angelo M."/>
            <person name="Pallavicini A."/>
            <person name="Toppo S."/>
            <person name="Simionati B."/>
            <person name="Conrad A."/>
            <person name="Hornischer K."/>
            <person name="Kauer G."/>
            <person name="Loehnert T.-H."/>
            <person name="Nordsiek G."/>
            <person name="Reichelt J."/>
            <person name="Scharfe M."/>
            <person name="Schoen O."/>
            <person name="Bargues M."/>
            <person name="Terol J."/>
            <person name="Climent J."/>
            <person name="Navarro P."/>
            <person name="Collado C."/>
            <person name="Perez-Perez A."/>
            <person name="Ottenwaelder B."/>
            <person name="Duchemin D."/>
            <person name="Cooke R."/>
            <person name="Laudie M."/>
            <person name="Berger-Llauro C."/>
            <person name="Purnelle B."/>
            <person name="Masuy D."/>
            <person name="de Haan M."/>
            <person name="Maarse A.C."/>
            <person name="Alcaraz J.-P."/>
            <person name="Cottet A."/>
            <person name="Casacuberta E."/>
            <person name="Monfort A."/>
            <person name="Argiriou A."/>
            <person name="Flores M."/>
            <person name="Liguori R."/>
            <person name="Vitale D."/>
            <person name="Mannhaupt G."/>
            <person name="Haase D."/>
            <person name="Schoof H."/>
            <person name="Rudd S."/>
            <person name="Zaccaria P."/>
            <person name="Mewes H.-W."/>
            <person name="Mayer K.F.X."/>
            <person name="Kaul S."/>
            <person name="Town C.D."/>
            <person name="Koo H.L."/>
            <person name="Tallon L.J."/>
            <person name="Jenkins J."/>
            <person name="Rooney T."/>
            <person name="Rizzo M."/>
            <person name="Walts A."/>
            <person name="Utterback T."/>
            <person name="Fujii C.Y."/>
            <person name="Shea T.P."/>
            <person name="Creasy T.H."/>
            <person name="Haas B."/>
            <person name="Maiti R."/>
            <person name="Wu D."/>
            <person name="Peterson J."/>
            <person name="Van Aken S."/>
            <person name="Pai G."/>
            <person name="Militscher J."/>
            <person name="Sellers P."/>
            <person name="Gill J.E."/>
            <person name="Feldblyum T.V."/>
            <person name="Preuss D."/>
            <person name="Lin X."/>
            <person name="Nierman W.C."/>
            <person name="Salzberg S.L."/>
            <person name="White O."/>
            <person name="Venter J.C."/>
            <person name="Fraser C.M."/>
            <person name="Kaneko T."/>
            <person name="Nakamura Y."/>
            <person name="Sato S."/>
            <person name="Kato T."/>
            <person name="Asamizu E."/>
            <person name="Sasamoto S."/>
            <person name="Kimura T."/>
            <person name="Idesawa K."/>
            <person name="Kawashima K."/>
            <person name="Kishida Y."/>
            <person name="Kiyokawa C."/>
            <person name="Kohara M."/>
            <person name="Matsumoto M."/>
            <person name="Matsuno A."/>
            <person name="Muraki A."/>
            <person name="Nakayama S."/>
            <person name="Nakazaki N."/>
            <person name="Shinpo S."/>
            <person name="Takeuchi C."/>
            <person name="Wada T."/>
            <person name="Watanabe A."/>
            <person name="Yamada M."/>
            <person name="Yasuda M."/>
            <person name="Tabata S."/>
        </authorList>
    </citation>
    <scope>NUCLEOTIDE SEQUENCE [LARGE SCALE GENOMIC DNA]</scope>
    <source>
        <strain>cv. Columbia</strain>
    </source>
</reference>
<reference key="4">
    <citation type="journal article" date="2017" name="Plant J.">
        <title>Araport11: a complete reannotation of the Arabidopsis thaliana reference genome.</title>
        <authorList>
            <person name="Cheng C.Y."/>
            <person name="Krishnakumar V."/>
            <person name="Chan A.P."/>
            <person name="Thibaud-Nissen F."/>
            <person name="Schobel S."/>
            <person name="Town C.D."/>
        </authorList>
    </citation>
    <scope>GENOME REANNOTATION</scope>
    <source>
        <strain>cv. Columbia</strain>
    </source>
</reference>
<reference key="5">
    <citation type="journal article" date="2003" name="Science">
        <title>Empirical analysis of transcriptional activity in the Arabidopsis genome.</title>
        <authorList>
            <person name="Yamada K."/>
            <person name="Lim J."/>
            <person name="Dale J.M."/>
            <person name="Chen H."/>
            <person name="Shinn P."/>
            <person name="Palm C.J."/>
            <person name="Southwick A.M."/>
            <person name="Wu H.C."/>
            <person name="Kim C.J."/>
            <person name="Nguyen M."/>
            <person name="Pham P.K."/>
            <person name="Cheuk R.F."/>
            <person name="Karlin-Newmann G."/>
            <person name="Liu S.X."/>
            <person name="Lam B."/>
            <person name="Sakano H."/>
            <person name="Wu T."/>
            <person name="Yu G."/>
            <person name="Miranda M."/>
            <person name="Quach H.L."/>
            <person name="Tripp M."/>
            <person name="Chang C.H."/>
            <person name="Lee J.M."/>
            <person name="Toriumi M.J."/>
            <person name="Chan M.M."/>
            <person name="Tang C.C."/>
            <person name="Onodera C.S."/>
            <person name="Deng J.M."/>
            <person name="Akiyama K."/>
            <person name="Ansari Y."/>
            <person name="Arakawa T."/>
            <person name="Banh J."/>
            <person name="Banno F."/>
            <person name="Bowser L."/>
            <person name="Brooks S.Y."/>
            <person name="Carninci P."/>
            <person name="Chao Q."/>
            <person name="Choy N."/>
            <person name="Enju A."/>
            <person name="Goldsmith A.D."/>
            <person name="Gurjal M."/>
            <person name="Hansen N.F."/>
            <person name="Hayashizaki Y."/>
            <person name="Johnson-Hopson C."/>
            <person name="Hsuan V.W."/>
            <person name="Iida K."/>
            <person name="Karnes M."/>
            <person name="Khan S."/>
            <person name="Koesema E."/>
            <person name="Ishida J."/>
            <person name="Jiang P.X."/>
            <person name="Jones T."/>
            <person name="Kawai J."/>
            <person name="Kamiya A."/>
            <person name="Meyers C."/>
            <person name="Nakajima M."/>
            <person name="Narusaka M."/>
            <person name="Seki M."/>
            <person name="Sakurai T."/>
            <person name="Satou M."/>
            <person name="Tamse R."/>
            <person name="Vaysberg M."/>
            <person name="Wallender E.K."/>
            <person name="Wong C."/>
            <person name="Yamamura Y."/>
            <person name="Yuan S."/>
            <person name="Shinozaki K."/>
            <person name="Davis R.W."/>
            <person name="Theologis A."/>
            <person name="Ecker J.R."/>
        </authorList>
    </citation>
    <scope>NUCLEOTIDE SEQUENCE [LARGE SCALE MRNA]</scope>
    <source>
        <strain>cv. Columbia</strain>
    </source>
</reference>
<reference key="6">
    <citation type="journal article" date="2002" name="Trends Plant Sci.">
        <title>A simple nomenclature for a complex proton pump: VHA genes encode the vacuolar H(+)-ATPase.</title>
        <authorList>
            <person name="Sze H."/>
            <person name="Schumacher K."/>
            <person name="Mueller M.L."/>
            <person name="Padmanaban S."/>
            <person name="Taiz L."/>
        </authorList>
    </citation>
    <scope>GENE FAMILY</scope>
    <scope>NOMENCLATURE</scope>
</reference>
<reference key="7">
    <citation type="journal article" date="2004" name="Mol. Cell. Proteomics">
        <title>Identification of new intrinsic proteins in Arabidopsis plasma membrane proteome.</title>
        <authorList>
            <person name="Marmagne A."/>
            <person name="Rouet M.-A."/>
            <person name="Ferro M."/>
            <person name="Rolland N."/>
            <person name="Alcon C."/>
            <person name="Joyard J."/>
            <person name="Garin J."/>
            <person name="Barbier-Brygoo H."/>
            <person name="Ephritikhine G."/>
        </authorList>
    </citation>
    <scope>IDENTIFICATION BY MASS SPECTROMETRY</scope>
    <scope>SUBCELLULAR LOCATION [LARGE SCALE ANALYSIS]</scope>
</reference>
<reference key="8">
    <citation type="journal article" date="2007" name="Mol. Cell. Proteomics">
        <title>A proteomics dissection of Arabidopsis thaliana vacuoles isolated from cell culture.</title>
        <authorList>
            <person name="Jaquinod M."/>
            <person name="Villiers F."/>
            <person name="Kieffer-Jaquinod S."/>
            <person name="Hugouvieux V."/>
            <person name="Bruley C."/>
            <person name="Garin J."/>
            <person name="Bourguignon J."/>
        </authorList>
    </citation>
    <scope>IDENTIFICATION BY MASS SPECTROMETRY</scope>
    <scope>SUBCELLULAR LOCATION [LARGE SCALE ANALYSIS]</scope>
</reference>
<proteinExistence type="evidence at protein level"/>
<dbReference type="EMBL" id="AJ005901">
    <property type="protein sequence ID" value="CAA06758.1"/>
    <property type="molecule type" value="mRNA"/>
</dbReference>
<dbReference type="EMBL" id="AF181688">
    <property type="protein sequence ID" value="AAD54418.1"/>
    <property type="molecule type" value="mRNA"/>
</dbReference>
<dbReference type="EMBL" id="AC010870">
    <property type="protein sequence ID" value="AAF24609.1"/>
    <property type="molecule type" value="Genomic_DNA"/>
</dbReference>
<dbReference type="EMBL" id="CP002686">
    <property type="protein sequence ID" value="AEE73659.1"/>
    <property type="molecule type" value="Genomic_DNA"/>
</dbReference>
<dbReference type="EMBL" id="CP002686">
    <property type="protein sequence ID" value="AEE73660.1"/>
    <property type="molecule type" value="Genomic_DNA"/>
</dbReference>
<dbReference type="EMBL" id="CP002686">
    <property type="protein sequence ID" value="ANM65962.1"/>
    <property type="molecule type" value="Genomic_DNA"/>
</dbReference>
<dbReference type="EMBL" id="CP002686">
    <property type="protein sequence ID" value="ANM65963.1"/>
    <property type="molecule type" value="Genomic_DNA"/>
</dbReference>
<dbReference type="EMBL" id="AY072365">
    <property type="protein sequence ID" value="AAL62357.1"/>
    <property type="molecule type" value="mRNA"/>
</dbReference>
<dbReference type="EMBL" id="AY114730">
    <property type="protein sequence ID" value="AAM48049.1"/>
    <property type="molecule type" value="mRNA"/>
</dbReference>
<dbReference type="PIR" id="T51825">
    <property type="entry name" value="T51825"/>
</dbReference>
<dbReference type="RefSeq" id="NP_001327894.1">
    <property type="nucleotide sequence ID" value="NM_001337334.1"/>
</dbReference>
<dbReference type="RefSeq" id="NP_001327895.1">
    <property type="nucleotide sequence ID" value="NM_001337333.1"/>
</dbReference>
<dbReference type="RefSeq" id="NP_186788.1">
    <property type="nucleotide sequence ID" value="NM_111005.6"/>
</dbReference>
<dbReference type="RefSeq" id="NP_850489.1">
    <property type="nucleotide sequence ID" value="NM_180158.3"/>
</dbReference>
<dbReference type="SMR" id="O82628"/>
<dbReference type="BioGRID" id="6463">
    <property type="interactions" value="4"/>
</dbReference>
<dbReference type="FunCoup" id="O82628">
    <property type="interactions" value="1672"/>
</dbReference>
<dbReference type="IntAct" id="O82628">
    <property type="interactions" value="1"/>
</dbReference>
<dbReference type="STRING" id="3702.O82628"/>
<dbReference type="TCDB" id="3.A.2.2.5">
    <property type="family name" value="the h+- or na+-translocating f-type, v-type and a-type atpase (f-atpase) superfamily"/>
</dbReference>
<dbReference type="iPTMnet" id="O82628"/>
<dbReference type="MetOSite" id="O82628"/>
<dbReference type="PaxDb" id="3702-AT3G01390.2"/>
<dbReference type="ProteomicsDB" id="243223"/>
<dbReference type="EnsemblPlants" id="AT3G01390.1">
    <property type="protein sequence ID" value="AT3G01390.1"/>
    <property type="gene ID" value="AT3G01390"/>
</dbReference>
<dbReference type="EnsemblPlants" id="AT3G01390.2">
    <property type="protein sequence ID" value="AT3G01390.2"/>
    <property type="gene ID" value="AT3G01390"/>
</dbReference>
<dbReference type="EnsemblPlants" id="AT3G01390.3">
    <property type="protein sequence ID" value="AT3G01390.3"/>
    <property type="gene ID" value="AT3G01390"/>
</dbReference>
<dbReference type="EnsemblPlants" id="AT3G01390.4">
    <property type="protein sequence ID" value="AT3G01390.4"/>
    <property type="gene ID" value="AT3G01390"/>
</dbReference>
<dbReference type="GeneID" id="821130"/>
<dbReference type="Gramene" id="AT3G01390.1">
    <property type="protein sequence ID" value="AT3G01390.1"/>
    <property type="gene ID" value="AT3G01390"/>
</dbReference>
<dbReference type="Gramene" id="AT3G01390.2">
    <property type="protein sequence ID" value="AT3G01390.2"/>
    <property type="gene ID" value="AT3G01390"/>
</dbReference>
<dbReference type="Gramene" id="AT3G01390.3">
    <property type="protein sequence ID" value="AT3G01390.3"/>
    <property type="gene ID" value="AT3G01390"/>
</dbReference>
<dbReference type="Gramene" id="AT3G01390.4">
    <property type="protein sequence ID" value="AT3G01390.4"/>
    <property type="gene ID" value="AT3G01390"/>
</dbReference>
<dbReference type="KEGG" id="ath:AT3G01390"/>
<dbReference type="Araport" id="AT3G01390"/>
<dbReference type="TAIR" id="AT3G01390">
    <property type="gene designation" value="VMA10"/>
</dbReference>
<dbReference type="eggNOG" id="KOG1772">
    <property type="taxonomic scope" value="Eukaryota"/>
</dbReference>
<dbReference type="HOGENOM" id="CLU_125101_3_1_1"/>
<dbReference type="InParanoid" id="O82628"/>
<dbReference type="OMA" id="ARKYRQD"/>
<dbReference type="OrthoDB" id="250802at2759"/>
<dbReference type="PhylomeDB" id="O82628"/>
<dbReference type="CD-CODE" id="4299E36E">
    <property type="entry name" value="Nucleolus"/>
</dbReference>
<dbReference type="PRO" id="PR:O82628"/>
<dbReference type="Proteomes" id="UP000006548">
    <property type="component" value="Chromosome 3"/>
</dbReference>
<dbReference type="ExpressionAtlas" id="O82628">
    <property type="expression patterns" value="baseline and differential"/>
</dbReference>
<dbReference type="GO" id="GO:0005829">
    <property type="term" value="C:cytosol"/>
    <property type="evidence" value="ECO:0007005"/>
    <property type="project" value="TAIR"/>
</dbReference>
<dbReference type="GO" id="GO:0005794">
    <property type="term" value="C:Golgi apparatus"/>
    <property type="evidence" value="ECO:0007005"/>
    <property type="project" value="TAIR"/>
</dbReference>
<dbReference type="GO" id="GO:0000325">
    <property type="term" value="C:plant-type vacuole"/>
    <property type="evidence" value="ECO:0007005"/>
    <property type="project" value="TAIR"/>
</dbReference>
<dbReference type="GO" id="GO:0005886">
    <property type="term" value="C:plasma membrane"/>
    <property type="evidence" value="ECO:0007005"/>
    <property type="project" value="TAIR"/>
</dbReference>
<dbReference type="GO" id="GO:0016469">
    <property type="term" value="C:proton-transporting two-sector ATPase complex"/>
    <property type="evidence" value="ECO:0000250"/>
    <property type="project" value="TAIR"/>
</dbReference>
<dbReference type="GO" id="GO:0016471">
    <property type="term" value="C:vacuolar proton-transporting V-type ATPase complex"/>
    <property type="evidence" value="ECO:0007669"/>
    <property type="project" value="InterPro"/>
</dbReference>
<dbReference type="GO" id="GO:0005773">
    <property type="term" value="C:vacuole"/>
    <property type="evidence" value="ECO:0007005"/>
    <property type="project" value="TAIR"/>
</dbReference>
<dbReference type="GO" id="GO:0046933">
    <property type="term" value="F:proton-transporting ATP synthase activity, rotational mechanism"/>
    <property type="evidence" value="ECO:0000250"/>
    <property type="project" value="TAIR"/>
</dbReference>
<dbReference type="GO" id="GO:0046961">
    <property type="term" value="F:proton-transporting ATPase activity, rotational mechanism"/>
    <property type="evidence" value="ECO:0007669"/>
    <property type="project" value="InterPro"/>
</dbReference>
<dbReference type="FunFam" id="1.20.5.2950:FF:000001">
    <property type="entry name" value="V-type proton ATPase subunit G"/>
    <property type="match status" value="1"/>
</dbReference>
<dbReference type="Gene3D" id="1.20.5.2950">
    <property type="match status" value="1"/>
</dbReference>
<dbReference type="InterPro" id="IPR005124">
    <property type="entry name" value="V-ATPase_G"/>
</dbReference>
<dbReference type="NCBIfam" id="TIGR01147">
    <property type="entry name" value="V_ATP_synt_G"/>
    <property type="match status" value="1"/>
</dbReference>
<dbReference type="PANTHER" id="PTHR12713:SF11">
    <property type="entry name" value="V-TYPE PROTON ATPASE SUBUNIT G"/>
    <property type="match status" value="1"/>
</dbReference>
<dbReference type="PANTHER" id="PTHR12713">
    <property type="entry name" value="VACUOLAR ATP SYNTHASE SUBUNIT G"/>
    <property type="match status" value="1"/>
</dbReference>
<dbReference type="Pfam" id="PF03179">
    <property type="entry name" value="V-ATPase_G"/>
    <property type="match status" value="1"/>
</dbReference>
<name>VATG1_ARATH</name>
<sequence length="110" mass="12397">MESNRGQGSIQQLLAAEVEAQHIVNAARTAKMARLKQAKEEAEKEIAEYKAQTEQDFQRKLEETSGDSGANVKRLEQETDTKIEQLKNEASRISKDVVEMLLKHVTTVKN</sequence>
<feature type="chain" id="PRO_0000192908" description="V-type proton ATPase subunit G1">
    <location>
        <begin position="1"/>
        <end position="110"/>
    </location>
</feature>
<feature type="region of interest" description="Disordered" evidence="2">
    <location>
        <begin position="60"/>
        <end position="80"/>
    </location>
</feature>
<feature type="modified residue" description="N-acetylmethionine" evidence="1">
    <location>
        <position position="1"/>
    </location>
</feature>
<accession>O82628</accession>
<evidence type="ECO:0000250" key="1">
    <source>
        <dbReference type="UniProtKB" id="O82629"/>
    </source>
</evidence>
<evidence type="ECO:0000256" key="2">
    <source>
        <dbReference type="SAM" id="MobiDB-lite"/>
    </source>
</evidence>
<evidence type="ECO:0000269" key="3">
    <source>
    </source>
</evidence>
<evidence type="ECO:0000269" key="4">
    <source>
    </source>
</evidence>
<evidence type="ECO:0000305" key="5"/>
<keyword id="KW-0007">Acetylation</keyword>
<keyword id="KW-1003">Cell membrane</keyword>
<keyword id="KW-0375">Hydrogen ion transport</keyword>
<keyword id="KW-0406">Ion transport</keyword>
<keyword id="KW-0472">Membrane</keyword>
<keyword id="KW-1185">Reference proteome</keyword>
<keyword id="KW-0813">Transport</keyword>
<keyword id="KW-0926">Vacuole</keyword>
<protein>
    <recommendedName>
        <fullName>V-type proton ATPase subunit G1</fullName>
        <shortName>V-ATPase subunit G1</shortName>
    </recommendedName>
    <alternativeName>
        <fullName>Vacuolar H(+)-ATPase subunit G isoform 1</fullName>
    </alternativeName>
    <alternativeName>
        <fullName>Vacuolar proton pump subunit G1</fullName>
    </alternativeName>
</protein>
<comment type="function">
    <text>Catalytic subunit of the peripheral V1 complex of vacuolar ATPase (V-ATPase). V-ATPase is responsible for acidifying a variety of intracellular compartments in eukaryotic cells.</text>
</comment>
<comment type="subunit">
    <text>V-ATPase is a heteromultimeric enzyme composed of a peripheral catalytic V1 complex (components A to H) attached to an integral membrane V0 proton pore complex (components: a, c, c'', d and e).</text>
</comment>
<comment type="subcellular location">
    <subcellularLocation>
        <location evidence="3">Cell membrane</location>
    </subcellularLocation>
    <subcellularLocation>
        <location evidence="4">Vacuole membrane</location>
        <topology evidence="5">Peripheral membrane protein</topology>
    </subcellularLocation>
</comment>
<comment type="similarity">
    <text evidence="5">Belongs to the V-ATPase G subunit family.</text>
</comment>
<gene>
    <name type="primary">VHA-G1</name>
    <name type="synonym">AVMA10</name>
    <name type="synonym">VAG1</name>
    <name type="synonym">VATG1</name>
    <name type="synonym">VMA10</name>
    <name type="ordered locus">At3g01390</name>
    <name type="ORF">T13O15.3</name>
</gene>
<organism>
    <name type="scientific">Arabidopsis thaliana</name>
    <name type="common">Mouse-ear cress</name>
    <dbReference type="NCBI Taxonomy" id="3702"/>
    <lineage>
        <taxon>Eukaryota</taxon>
        <taxon>Viridiplantae</taxon>
        <taxon>Streptophyta</taxon>
        <taxon>Embryophyta</taxon>
        <taxon>Tracheophyta</taxon>
        <taxon>Spermatophyta</taxon>
        <taxon>Magnoliopsida</taxon>
        <taxon>eudicotyledons</taxon>
        <taxon>Gunneridae</taxon>
        <taxon>Pentapetalae</taxon>
        <taxon>rosids</taxon>
        <taxon>malvids</taxon>
        <taxon>Brassicales</taxon>
        <taxon>Brassicaceae</taxon>
        <taxon>Camelineae</taxon>
        <taxon>Arabidopsis</taxon>
    </lineage>
</organism>